<dbReference type="EC" id="3.1.1.4"/>
<dbReference type="EMBL" id="AF015245">
    <property type="protein sequence ID" value="AAB71847.1"/>
    <property type="molecule type" value="mRNA"/>
</dbReference>
<dbReference type="SMR" id="O42190"/>
<dbReference type="GO" id="GO:0005576">
    <property type="term" value="C:extracellular region"/>
    <property type="evidence" value="ECO:0007669"/>
    <property type="project" value="UniProtKB-SubCell"/>
</dbReference>
<dbReference type="GO" id="GO:0005509">
    <property type="term" value="F:calcium ion binding"/>
    <property type="evidence" value="ECO:0007669"/>
    <property type="project" value="InterPro"/>
</dbReference>
<dbReference type="GO" id="GO:0047498">
    <property type="term" value="F:calcium-dependent phospholipase A2 activity"/>
    <property type="evidence" value="ECO:0007669"/>
    <property type="project" value="TreeGrafter"/>
</dbReference>
<dbReference type="GO" id="GO:0005543">
    <property type="term" value="F:phospholipid binding"/>
    <property type="evidence" value="ECO:0007669"/>
    <property type="project" value="TreeGrafter"/>
</dbReference>
<dbReference type="GO" id="GO:0050482">
    <property type="term" value="P:arachidonate secretion"/>
    <property type="evidence" value="ECO:0007669"/>
    <property type="project" value="InterPro"/>
</dbReference>
<dbReference type="GO" id="GO:0016042">
    <property type="term" value="P:lipid catabolic process"/>
    <property type="evidence" value="ECO:0007669"/>
    <property type="project" value="UniProtKB-KW"/>
</dbReference>
<dbReference type="GO" id="GO:0042130">
    <property type="term" value="P:negative regulation of T cell proliferation"/>
    <property type="evidence" value="ECO:0007669"/>
    <property type="project" value="TreeGrafter"/>
</dbReference>
<dbReference type="GO" id="GO:0006644">
    <property type="term" value="P:phospholipid metabolic process"/>
    <property type="evidence" value="ECO:0007669"/>
    <property type="project" value="InterPro"/>
</dbReference>
<dbReference type="CDD" id="cd00125">
    <property type="entry name" value="PLA2c"/>
    <property type="match status" value="1"/>
</dbReference>
<dbReference type="FunFam" id="1.20.90.10:FF:000001">
    <property type="entry name" value="Basic phospholipase A2 homolog"/>
    <property type="match status" value="1"/>
</dbReference>
<dbReference type="Gene3D" id="1.20.90.10">
    <property type="entry name" value="Phospholipase A2 domain"/>
    <property type="match status" value="1"/>
</dbReference>
<dbReference type="InterPro" id="IPR001211">
    <property type="entry name" value="PLipase_A2"/>
</dbReference>
<dbReference type="InterPro" id="IPR033112">
    <property type="entry name" value="PLipase_A2_Asp_AS"/>
</dbReference>
<dbReference type="InterPro" id="IPR016090">
    <property type="entry name" value="PLipase_A2_dom"/>
</dbReference>
<dbReference type="InterPro" id="IPR036444">
    <property type="entry name" value="PLipase_A2_dom_sf"/>
</dbReference>
<dbReference type="InterPro" id="IPR033113">
    <property type="entry name" value="PLipase_A2_His_AS"/>
</dbReference>
<dbReference type="PANTHER" id="PTHR11716">
    <property type="entry name" value="PHOSPHOLIPASE A2 FAMILY MEMBER"/>
    <property type="match status" value="1"/>
</dbReference>
<dbReference type="PANTHER" id="PTHR11716:SF9">
    <property type="entry name" value="PHOSPHOLIPASE A2, MEMBRANE ASSOCIATED"/>
    <property type="match status" value="1"/>
</dbReference>
<dbReference type="Pfam" id="PF00068">
    <property type="entry name" value="Phospholip_A2_1"/>
    <property type="match status" value="1"/>
</dbReference>
<dbReference type="PRINTS" id="PR00389">
    <property type="entry name" value="PHPHLIPASEA2"/>
</dbReference>
<dbReference type="SMART" id="SM00085">
    <property type="entry name" value="PA2c"/>
    <property type="match status" value="1"/>
</dbReference>
<dbReference type="SUPFAM" id="SSF48619">
    <property type="entry name" value="Phospholipase A2, PLA2"/>
    <property type="match status" value="1"/>
</dbReference>
<dbReference type="PROSITE" id="PS00119">
    <property type="entry name" value="PA2_ASP"/>
    <property type="match status" value="1"/>
</dbReference>
<dbReference type="PROSITE" id="PS00118">
    <property type="entry name" value="PA2_HIS"/>
    <property type="match status" value="1"/>
</dbReference>
<keyword id="KW-0106">Calcium</keyword>
<keyword id="KW-1015">Disulfide bond</keyword>
<keyword id="KW-0378">Hydrolase</keyword>
<keyword id="KW-0442">Lipid degradation</keyword>
<keyword id="KW-0443">Lipid metabolism</keyword>
<keyword id="KW-0479">Metal-binding</keyword>
<keyword id="KW-0964">Secreted</keyword>
<organism>
    <name type="scientific">Gloydius halys</name>
    <name type="common">Chinese water mocassin</name>
    <name type="synonym">Agkistrodon halys</name>
    <dbReference type="NCBI Taxonomy" id="8714"/>
    <lineage>
        <taxon>Eukaryota</taxon>
        <taxon>Metazoa</taxon>
        <taxon>Chordata</taxon>
        <taxon>Craniata</taxon>
        <taxon>Vertebrata</taxon>
        <taxon>Euteleostomi</taxon>
        <taxon>Lepidosauria</taxon>
        <taxon>Squamata</taxon>
        <taxon>Bifurcata</taxon>
        <taxon>Unidentata</taxon>
        <taxon>Episquamata</taxon>
        <taxon>Toxicofera</taxon>
        <taxon>Serpentes</taxon>
        <taxon>Colubroidea</taxon>
        <taxon>Viperidae</taxon>
        <taxon>Crotalinae</taxon>
        <taxon>Gloydius</taxon>
    </lineage>
</organism>
<name>PA2A6_GLOHA</name>
<feature type="chain" id="PRO_0000161601" description="Acidic phospholipase A2 BA2">
    <location>
        <begin position="1"/>
        <end position="124"/>
    </location>
</feature>
<feature type="active site" evidence="2">
    <location>
        <position position="47"/>
    </location>
</feature>
<feature type="active site" evidence="2">
    <location>
        <position position="89"/>
    </location>
</feature>
<feature type="binding site" evidence="2">
    <location>
        <position position="27"/>
    </location>
    <ligand>
        <name>Ca(2+)</name>
        <dbReference type="ChEBI" id="CHEBI:29108"/>
    </ligand>
</feature>
<feature type="binding site" evidence="2">
    <location>
        <position position="29"/>
    </location>
    <ligand>
        <name>Ca(2+)</name>
        <dbReference type="ChEBI" id="CHEBI:29108"/>
    </ligand>
</feature>
<feature type="binding site" evidence="2">
    <location>
        <position position="31"/>
    </location>
    <ligand>
        <name>Ca(2+)</name>
        <dbReference type="ChEBI" id="CHEBI:29108"/>
    </ligand>
</feature>
<feature type="binding site" evidence="2">
    <location>
        <position position="48"/>
    </location>
    <ligand>
        <name>Ca(2+)</name>
        <dbReference type="ChEBI" id="CHEBI:29108"/>
    </ligand>
</feature>
<feature type="disulfide bond" evidence="2">
    <location>
        <begin position="26"/>
        <end position="116"/>
    </location>
</feature>
<feature type="disulfide bond" evidence="2">
    <location>
        <begin position="28"/>
        <end position="44"/>
    </location>
</feature>
<feature type="disulfide bond" evidence="2">
    <location>
        <begin position="43"/>
        <end position="95"/>
    </location>
</feature>
<feature type="disulfide bond" evidence="2">
    <location>
        <begin position="49"/>
        <end position="124"/>
    </location>
</feature>
<feature type="disulfide bond" evidence="2">
    <location>
        <begin position="50"/>
        <end position="88"/>
    </location>
</feature>
<feature type="disulfide bond" evidence="2">
    <location>
        <begin position="57"/>
        <end position="81"/>
    </location>
</feature>
<feature type="disulfide bond" evidence="2">
    <location>
        <begin position="75"/>
        <end position="86"/>
    </location>
</feature>
<sequence>NLLQFEKMIKKMTGKEPVVSYAFYGCYCGSGGQGKPKDATDRCCFVHDCCYGKVTGCDPKMDVYSFSEENGDIVCGGDDPCKKEICECDRAAAICFRDNLNTYNDKKYWAFGAKNCPQEESEAC</sequence>
<proteinExistence type="evidence at transcript level"/>
<evidence type="ECO:0000250" key="1"/>
<evidence type="ECO:0000250" key="2">
    <source>
        <dbReference type="UniProtKB" id="O42187"/>
    </source>
</evidence>
<evidence type="ECO:0000255" key="3">
    <source>
        <dbReference type="PROSITE-ProRule" id="PRU10035"/>
    </source>
</evidence>
<evidence type="ECO:0000255" key="4">
    <source>
        <dbReference type="PROSITE-ProRule" id="PRU10036"/>
    </source>
</evidence>
<evidence type="ECO:0000305" key="5"/>
<accession>O42190</accession>
<protein>
    <recommendedName>
        <fullName>Acidic phospholipase A2 BA2</fullName>
        <shortName>svPLA2</shortName>
        <ecNumber>3.1.1.4</ecNumber>
    </recommendedName>
    <alternativeName>
        <fullName>Phosphatidylcholine 2-acylhydrolase</fullName>
    </alternativeName>
</protein>
<reference key="1">
    <citation type="journal article" date="1998" name="Toxicon">
        <title>Diversity of cDNAs encoding phospholipase A2 from Agkistrodon halys pallas venom, and its expression in E. coli.</title>
        <authorList>
            <person name="Pan H."/>
            <person name="Liu X.-L."/>
            <person name="Ou-Yang L.-L."/>
            <person name="Yang G.-Z."/>
            <person name="Zhou Y.-C."/>
            <person name="Li Z.-P."/>
            <person name="Wu X.-F."/>
        </authorList>
    </citation>
    <scope>NUCLEOTIDE SEQUENCE [MRNA]</scope>
    <source>
        <tissue>Venom gland</tissue>
    </source>
</reference>
<comment type="function">
    <text evidence="1">PLA2 catalyzes the calcium-dependent hydrolysis of the 2-acyl groups in 3-sn-phosphoglycerides.</text>
</comment>
<comment type="catalytic activity">
    <reaction evidence="3 4">
        <text>a 1,2-diacyl-sn-glycero-3-phosphocholine + H2O = a 1-acyl-sn-glycero-3-phosphocholine + a fatty acid + H(+)</text>
        <dbReference type="Rhea" id="RHEA:15801"/>
        <dbReference type="ChEBI" id="CHEBI:15377"/>
        <dbReference type="ChEBI" id="CHEBI:15378"/>
        <dbReference type="ChEBI" id="CHEBI:28868"/>
        <dbReference type="ChEBI" id="CHEBI:57643"/>
        <dbReference type="ChEBI" id="CHEBI:58168"/>
        <dbReference type="EC" id="3.1.1.4"/>
    </reaction>
</comment>
<comment type="cofactor">
    <cofactor evidence="1">
        <name>Ca(2+)</name>
        <dbReference type="ChEBI" id="CHEBI:29108"/>
    </cofactor>
    <text evidence="1">Binds 1 Ca(2+) ion.</text>
</comment>
<comment type="subcellular location">
    <subcellularLocation>
        <location evidence="1">Secreted</location>
    </subcellularLocation>
</comment>
<comment type="tissue specificity">
    <text>Expressed by the venom gland.</text>
</comment>
<comment type="similarity">
    <text evidence="5">Belongs to the phospholipase A2 family. Group II subfamily. D49 sub-subfamily.</text>
</comment>